<protein>
    <recommendedName>
        <fullName>High mobility group protein HMG-I/HMG-Y</fullName>
        <shortName>HMG-I(Y)</shortName>
    </recommendedName>
    <alternativeName>
        <fullName>High mobility group AT-hook protein 1</fullName>
        <shortName>High mobility group protein A1</shortName>
    </alternativeName>
</protein>
<reference key="1">
    <citation type="journal article" date="1988" name="J. Biol. Chem.">
        <title>Complete murine cDNA sequence, genomic structure, and tissue expression of the high mobility group protein HMG-I(Y).</title>
        <authorList>
            <person name="Johnson K.R."/>
            <person name="Lehn D.A."/>
            <person name="Elton T.S."/>
            <person name="Barr P.J."/>
            <person name="Reeves R."/>
        </authorList>
    </citation>
    <scope>NUCLEOTIDE SEQUENCE [MRNA] (ISOFORM HMG-Y)</scope>
</reference>
<reference key="2">
    <citation type="journal article" date="2001" name="Gene">
        <title>Sequence and analysis of the murine Hmgiy (Hmga1) gene locus.</title>
        <authorList>
            <person name="Pedulla M.L."/>
            <person name="Treff N.R."/>
            <person name="Resar L.M.S."/>
            <person name="Reeves R."/>
        </authorList>
    </citation>
    <scope>NUCLEOTIDE SEQUENCE [GENOMIC DNA] (ISOFORMS HMG-I AND HMG-Y)</scope>
    <source>
        <strain>BALB/cJ</strain>
    </source>
</reference>
<reference key="3">
    <citation type="journal article" date="2005" name="Science">
        <title>The transcriptional landscape of the mammalian genome.</title>
        <authorList>
            <person name="Carninci P."/>
            <person name="Kasukawa T."/>
            <person name="Katayama S."/>
            <person name="Gough J."/>
            <person name="Frith M.C."/>
            <person name="Maeda N."/>
            <person name="Oyama R."/>
            <person name="Ravasi T."/>
            <person name="Lenhard B."/>
            <person name="Wells C."/>
            <person name="Kodzius R."/>
            <person name="Shimokawa K."/>
            <person name="Bajic V.B."/>
            <person name="Brenner S.E."/>
            <person name="Batalov S."/>
            <person name="Forrest A.R."/>
            <person name="Zavolan M."/>
            <person name="Davis M.J."/>
            <person name="Wilming L.G."/>
            <person name="Aidinis V."/>
            <person name="Allen J.E."/>
            <person name="Ambesi-Impiombato A."/>
            <person name="Apweiler R."/>
            <person name="Aturaliya R.N."/>
            <person name="Bailey T.L."/>
            <person name="Bansal M."/>
            <person name="Baxter L."/>
            <person name="Beisel K.W."/>
            <person name="Bersano T."/>
            <person name="Bono H."/>
            <person name="Chalk A.M."/>
            <person name="Chiu K.P."/>
            <person name="Choudhary V."/>
            <person name="Christoffels A."/>
            <person name="Clutterbuck D.R."/>
            <person name="Crowe M.L."/>
            <person name="Dalla E."/>
            <person name="Dalrymple B.P."/>
            <person name="de Bono B."/>
            <person name="Della Gatta G."/>
            <person name="di Bernardo D."/>
            <person name="Down T."/>
            <person name="Engstrom P."/>
            <person name="Fagiolini M."/>
            <person name="Faulkner G."/>
            <person name="Fletcher C.F."/>
            <person name="Fukushima T."/>
            <person name="Furuno M."/>
            <person name="Futaki S."/>
            <person name="Gariboldi M."/>
            <person name="Georgii-Hemming P."/>
            <person name="Gingeras T.R."/>
            <person name="Gojobori T."/>
            <person name="Green R.E."/>
            <person name="Gustincich S."/>
            <person name="Harbers M."/>
            <person name="Hayashi Y."/>
            <person name="Hensch T.K."/>
            <person name="Hirokawa N."/>
            <person name="Hill D."/>
            <person name="Huminiecki L."/>
            <person name="Iacono M."/>
            <person name="Ikeo K."/>
            <person name="Iwama A."/>
            <person name="Ishikawa T."/>
            <person name="Jakt M."/>
            <person name="Kanapin A."/>
            <person name="Katoh M."/>
            <person name="Kawasawa Y."/>
            <person name="Kelso J."/>
            <person name="Kitamura H."/>
            <person name="Kitano H."/>
            <person name="Kollias G."/>
            <person name="Krishnan S.P."/>
            <person name="Kruger A."/>
            <person name="Kummerfeld S.K."/>
            <person name="Kurochkin I.V."/>
            <person name="Lareau L.F."/>
            <person name="Lazarevic D."/>
            <person name="Lipovich L."/>
            <person name="Liu J."/>
            <person name="Liuni S."/>
            <person name="McWilliam S."/>
            <person name="Madan Babu M."/>
            <person name="Madera M."/>
            <person name="Marchionni L."/>
            <person name="Matsuda H."/>
            <person name="Matsuzawa S."/>
            <person name="Miki H."/>
            <person name="Mignone F."/>
            <person name="Miyake S."/>
            <person name="Morris K."/>
            <person name="Mottagui-Tabar S."/>
            <person name="Mulder N."/>
            <person name="Nakano N."/>
            <person name="Nakauchi H."/>
            <person name="Ng P."/>
            <person name="Nilsson R."/>
            <person name="Nishiguchi S."/>
            <person name="Nishikawa S."/>
            <person name="Nori F."/>
            <person name="Ohara O."/>
            <person name="Okazaki Y."/>
            <person name="Orlando V."/>
            <person name="Pang K.C."/>
            <person name="Pavan W.J."/>
            <person name="Pavesi G."/>
            <person name="Pesole G."/>
            <person name="Petrovsky N."/>
            <person name="Piazza S."/>
            <person name="Reed J."/>
            <person name="Reid J.F."/>
            <person name="Ring B.Z."/>
            <person name="Ringwald M."/>
            <person name="Rost B."/>
            <person name="Ruan Y."/>
            <person name="Salzberg S.L."/>
            <person name="Sandelin A."/>
            <person name="Schneider C."/>
            <person name="Schoenbach C."/>
            <person name="Sekiguchi K."/>
            <person name="Semple C.A."/>
            <person name="Seno S."/>
            <person name="Sessa L."/>
            <person name="Sheng Y."/>
            <person name="Shibata Y."/>
            <person name="Shimada H."/>
            <person name="Shimada K."/>
            <person name="Silva D."/>
            <person name="Sinclair B."/>
            <person name="Sperling S."/>
            <person name="Stupka E."/>
            <person name="Sugiura K."/>
            <person name="Sultana R."/>
            <person name="Takenaka Y."/>
            <person name="Taki K."/>
            <person name="Tammoja K."/>
            <person name="Tan S.L."/>
            <person name="Tang S."/>
            <person name="Taylor M.S."/>
            <person name="Tegner J."/>
            <person name="Teichmann S.A."/>
            <person name="Ueda H.R."/>
            <person name="van Nimwegen E."/>
            <person name="Verardo R."/>
            <person name="Wei C.L."/>
            <person name="Yagi K."/>
            <person name="Yamanishi H."/>
            <person name="Zabarovsky E."/>
            <person name="Zhu S."/>
            <person name="Zimmer A."/>
            <person name="Hide W."/>
            <person name="Bult C."/>
            <person name="Grimmond S.M."/>
            <person name="Teasdale R.D."/>
            <person name="Liu E.T."/>
            <person name="Brusic V."/>
            <person name="Quackenbush J."/>
            <person name="Wahlestedt C."/>
            <person name="Mattick J.S."/>
            <person name="Hume D.A."/>
            <person name="Kai C."/>
            <person name="Sasaki D."/>
            <person name="Tomaru Y."/>
            <person name="Fukuda S."/>
            <person name="Kanamori-Katayama M."/>
            <person name="Suzuki M."/>
            <person name="Aoki J."/>
            <person name="Arakawa T."/>
            <person name="Iida J."/>
            <person name="Imamura K."/>
            <person name="Itoh M."/>
            <person name="Kato T."/>
            <person name="Kawaji H."/>
            <person name="Kawagashira N."/>
            <person name="Kawashima T."/>
            <person name="Kojima M."/>
            <person name="Kondo S."/>
            <person name="Konno H."/>
            <person name="Nakano K."/>
            <person name="Ninomiya N."/>
            <person name="Nishio T."/>
            <person name="Okada M."/>
            <person name="Plessy C."/>
            <person name="Shibata K."/>
            <person name="Shiraki T."/>
            <person name="Suzuki S."/>
            <person name="Tagami M."/>
            <person name="Waki K."/>
            <person name="Watahiki A."/>
            <person name="Okamura-Oho Y."/>
            <person name="Suzuki H."/>
            <person name="Kawai J."/>
            <person name="Hayashizaki Y."/>
        </authorList>
    </citation>
    <scope>NUCLEOTIDE SEQUENCE [LARGE SCALE MRNA] (ISOFORM HMG-Y)</scope>
    <source>
        <strain>C57BL/6J</strain>
        <tissue>Embryonic stem cell</tissue>
    </source>
</reference>
<reference key="4">
    <citation type="journal article" date="2004" name="Genome Res.">
        <title>The status, quality, and expansion of the NIH full-length cDNA project: the Mammalian Gene Collection (MGC).</title>
        <authorList>
            <consortium name="The MGC Project Team"/>
        </authorList>
    </citation>
    <scope>NUCLEOTIDE SEQUENCE [LARGE SCALE MRNA] (ISOFORM HMG-I)</scope>
    <source>
        <strain>FVB/N</strain>
        <tissue>Colon</tissue>
    </source>
</reference>
<reference key="5">
    <citation type="journal article" date="1992" name="J. Biol. Chem.">
        <title>Mass spectrometric analysis of the HMGY protein from Lewis lung carcinoma. Identification of phosphorylation sites.</title>
        <authorList>
            <person name="Ferranti P."/>
            <person name="Malorni A."/>
            <person name="Marino G."/>
            <person name="Pucci P."/>
            <person name="Goodwin G.H."/>
            <person name="Manfioletti G."/>
            <person name="Giancotti V."/>
        </authorList>
    </citation>
    <scope>PHOSPHORYLATION AT SER-99; SER-102 AND SER-103</scope>
    <scope>ACETYLATION AT SER-2</scope>
    <scope>IDENTIFICATION BY MASS SPECTROMETRY</scope>
</reference>
<reference key="6">
    <citation type="journal article" date="2001" name="Oncogene">
        <title>High mobility group I (Y) proteins bind HIPK2, a serine-threonine kinase protein which inhibits cell growth.</title>
        <authorList>
            <person name="Pierantoni G.M."/>
            <person name="Fedele M."/>
            <person name="Pentimalli F."/>
            <person name="Benvenuto G."/>
            <person name="Pero R."/>
            <person name="Viglietto G."/>
            <person name="Santoro M."/>
            <person name="Chiariotti L."/>
            <person name="Fusco A."/>
        </authorList>
    </citation>
    <scope>INTERACTION WITH HIPK2</scope>
    <scope>PHOSPHORYLATION</scope>
</reference>
<reference key="7">
    <citation type="journal article" date="2006" name="Mol. Cell. Proteomics">
        <title>Comprehensive identification of phosphorylation sites in postsynaptic density preparations.</title>
        <authorList>
            <person name="Trinidad J.C."/>
            <person name="Specht C.G."/>
            <person name="Thalhammer A."/>
            <person name="Schoepfer R."/>
            <person name="Burlingame A.L."/>
        </authorList>
    </citation>
    <scope>IDENTIFICATION BY MASS SPECTROMETRY [LARGE SCALE ANALYSIS]</scope>
    <source>
        <tissue>Brain</tissue>
    </source>
</reference>
<reference key="8">
    <citation type="journal article" date="2007" name="J. Proteome Res.">
        <title>A differential phosphoproteomic analysis of retinoic acid-treated P19 cells.</title>
        <authorList>
            <person name="Smith J.C."/>
            <person name="Duchesne M.A."/>
            <person name="Tozzi P."/>
            <person name="Ethier M."/>
            <person name="Figeys D."/>
        </authorList>
    </citation>
    <scope>PHOSPHORYLATION [LARGE SCALE ANALYSIS] AT SER-99; SER-102 AND SER-103</scope>
    <scope>IDENTIFICATION BY MASS SPECTROMETRY [LARGE SCALE ANALYSIS]</scope>
    <source>
        <tissue>Teratocarcinoma</tissue>
    </source>
</reference>
<reference key="9">
    <citation type="journal article" date="2007" name="Proc. Natl. Acad. Sci. U.S.A.">
        <title>Large-scale phosphorylation analysis of mouse liver.</title>
        <authorList>
            <person name="Villen J."/>
            <person name="Beausoleil S.A."/>
            <person name="Gerber S.A."/>
            <person name="Gygi S.P."/>
        </authorList>
    </citation>
    <scope>PHOSPHORYLATION [LARGE SCALE ANALYSIS] AT SER-102 AND SER-103</scope>
    <scope>IDENTIFICATION BY MASS SPECTROMETRY [LARGE SCALE ANALYSIS]</scope>
    <source>
        <tissue>Liver</tissue>
    </source>
</reference>
<reference key="10">
    <citation type="journal article" date="2007" name="Science">
        <title>ATM and ATR substrate analysis reveals extensive protein networks responsive to DNA damage.</title>
        <authorList>
            <person name="Matsuoka S."/>
            <person name="Ballif B.A."/>
            <person name="Smogorzewska A."/>
            <person name="McDonald E.R. III"/>
            <person name="Hurov K.E."/>
            <person name="Luo J."/>
            <person name="Bakalarski C.E."/>
            <person name="Zhao Z."/>
            <person name="Solimini N."/>
            <person name="Lerenthal Y."/>
            <person name="Shiloh Y."/>
            <person name="Gygi S.P."/>
            <person name="Elledge S.J."/>
        </authorList>
    </citation>
    <scope>IDENTIFICATION BY MASS SPECTROMETRY [LARGE SCALE ANALYSIS]</scope>
    <source>
        <tissue>Embryonic fibroblast</tissue>
    </source>
</reference>
<reference key="11">
    <citation type="journal article" date="2008" name="J. Proteome Res.">
        <title>Specific phosphopeptide enrichment with immobilized titanium ion affinity chromatography adsorbent for phosphoproteome analysis.</title>
        <authorList>
            <person name="Zhou H."/>
            <person name="Ye M."/>
            <person name="Dong J."/>
            <person name="Han G."/>
            <person name="Jiang X."/>
            <person name="Wu R."/>
            <person name="Zou H."/>
        </authorList>
    </citation>
    <scope>PHOSPHORYLATION [LARGE SCALE ANALYSIS] AT SER-102 AND SER-103</scope>
    <scope>IDENTIFICATION BY MASS SPECTROMETRY [LARGE SCALE ANALYSIS]</scope>
    <source>
        <tissue>Liver</tissue>
    </source>
</reference>
<reference key="12">
    <citation type="journal article" date="2009" name="Mol. Cell. Proteomics">
        <title>Large scale localization of protein phosphorylation by use of electron capture dissociation mass spectrometry.</title>
        <authorList>
            <person name="Sweet S.M."/>
            <person name="Bailey C.M."/>
            <person name="Cunningham D.L."/>
            <person name="Heath J.K."/>
            <person name="Cooper H.J."/>
        </authorList>
    </citation>
    <scope>PHOSPHORYLATION [LARGE SCALE ANALYSIS] AT THR-53; SER-99; SER-102 AND SER-103</scope>
    <scope>IDENTIFICATION BY MASS SPECTROMETRY [LARGE SCALE ANALYSIS]</scope>
    <source>
        <tissue>Embryonic fibroblast</tissue>
    </source>
</reference>
<reference key="13">
    <citation type="journal article" date="2010" name="Cell">
        <title>A tissue-specific atlas of mouse protein phosphorylation and expression.</title>
        <authorList>
            <person name="Huttlin E.L."/>
            <person name="Jedrychowski M.P."/>
            <person name="Elias J.E."/>
            <person name="Goswami T."/>
            <person name="Rad R."/>
            <person name="Beausoleil S.A."/>
            <person name="Villen J."/>
            <person name="Haas W."/>
            <person name="Sowa M.E."/>
            <person name="Gygi S.P."/>
        </authorList>
    </citation>
    <scope>PHOSPHORYLATION [LARGE SCALE ANALYSIS] AT THR-53; SER-99; SER-102 AND SER-103</scope>
    <scope>IDENTIFICATION BY MASS SPECTROMETRY [LARGE SCALE ANALYSIS]</scope>
    <source>
        <tissue>Brain</tissue>
        <tissue>Brown adipose tissue</tissue>
        <tissue>Heart</tissue>
        <tissue>Kidney</tissue>
        <tissue>Liver</tissue>
        <tissue>Lung</tissue>
        <tissue>Pancreas</tissue>
        <tissue>Spleen</tissue>
        <tissue>Testis</tissue>
    </source>
</reference>
<reference key="14">
    <citation type="journal article" date="2013" name="Mol. Cell">
        <title>SIRT5-mediated lysine desuccinylation impacts diverse metabolic pathways.</title>
        <authorList>
            <person name="Park J."/>
            <person name="Chen Y."/>
            <person name="Tishkoff D.X."/>
            <person name="Peng C."/>
            <person name="Tan M."/>
            <person name="Dai L."/>
            <person name="Xie Z."/>
            <person name="Zhang Y."/>
            <person name="Zwaans B.M."/>
            <person name="Skinner M.E."/>
            <person name="Lombard D.B."/>
            <person name="Zhao Y."/>
        </authorList>
    </citation>
    <scope>ACETYLATION [LARGE SCALE ANALYSIS] AT SER-2; LYS-7 AND LYS-15</scope>
    <scope>CLEAVAGE OF INITIATOR METHIONINE [LARGE SCALE ANALYSIS]</scope>
    <scope>IDENTIFICATION BY MASS SPECTROMETRY [LARGE SCALE ANALYSIS]</scope>
    <source>
        <tissue>Embryonic fibroblast</tissue>
    </source>
</reference>
<evidence type="ECO:0000250" key="1"/>
<evidence type="ECO:0000250" key="2">
    <source>
        <dbReference type="UniProtKB" id="P17096"/>
    </source>
</evidence>
<evidence type="ECO:0000256" key="3">
    <source>
        <dbReference type="SAM" id="MobiDB-lite"/>
    </source>
</evidence>
<evidence type="ECO:0000269" key="4">
    <source>
    </source>
</evidence>
<evidence type="ECO:0000269" key="5">
    <source>
    </source>
</evidence>
<evidence type="ECO:0000303" key="6">
    <source>
    </source>
</evidence>
<evidence type="ECO:0000303" key="7">
    <source>
    </source>
</evidence>
<evidence type="ECO:0000305" key="8"/>
<evidence type="ECO:0007744" key="9">
    <source>
    </source>
</evidence>
<evidence type="ECO:0007744" key="10">
    <source>
    </source>
</evidence>
<evidence type="ECO:0007744" key="11">
    <source>
    </source>
</evidence>
<evidence type="ECO:0007744" key="12">
    <source>
    </source>
</evidence>
<evidence type="ECO:0007744" key="13">
    <source>
    </source>
</evidence>
<evidence type="ECO:0007744" key="14">
    <source>
    </source>
</evidence>
<proteinExistence type="evidence at protein level"/>
<feature type="initiator methionine" description="Removed" evidence="5 14">
    <location>
        <position position="1"/>
    </location>
</feature>
<feature type="chain" id="PRO_0000206709" description="High mobility group protein HMG-I/HMG-Y">
    <location>
        <begin position="2"/>
        <end position="107"/>
    </location>
</feature>
<feature type="DNA-binding region" description="A.T hook 1">
    <location>
        <begin position="21"/>
        <end position="31"/>
    </location>
</feature>
<feature type="DNA-binding region" description="A.T hook 2">
    <location>
        <begin position="53"/>
        <end position="63"/>
    </location>
</feature>
<feature type="DNA-binding region" description="A.T hook 3">
    <location>
        <begin position="78"/>
        <end position="89"/>
    </location>
</feature>
<feature type="region of interest" description="Disordered" evidence="3">
    <location>
        <begin position="1"/>
        <end position="107"/>
    </location>
</feature>
<feature type="region of interest" description="Interaction with HIPK2" evidence="4">
    <location>
        <begin position="53"/>
        <end position="77"/>
    </location>
</feature>
<feature type="compositionally biased region" description="Polar residues" evidence="3">
    <location>
        <begin position="1"/>
        <end position="13"/>
    </location>
</feature>
<feature type="compositionally biased region" description="Basic and acidic residues" evidence="3">
    <location>
        <begin position="15"/>
        <end position="24"/>
    </location>
</feature>
<feature type="compositionally biased region" description="Basic residues" evidence="3">
    <location>
        <begin position="55"/>
        <end position="74"/>
    </location>
</feature>
<feature type="compositionally biased region" description="Acidic residues" evidence="3">
    <location>
        <begin position="93"/>
        <end position="107"/>
    </location>
</feature>
<feature type="modified residue" description="N-acetylserine" evidence="5 14">
    <location>
        <position position="2"/>
    </location>
</feature>
<feature type="modified residue" description="N6-acetyllysine" evidence="14">
    <location>
        <position position="7"/>
    </location>
</feature>
<feature type="modified residue" description="ADP-ribosylserine" evidence="2">
    <location>
        <position position="8"/>
    </location>
</feature>
<feature type="modified residue" description="ADP-ribosylserine; alternate" evidence="2">
    <location>
        <position position="9"/>
    </location>
</feature>
<feature type="modified residue" description="Phosphoserine; alternate" evidence="2">
    <location>
        <position position="9"/>
    </location>
</feature>
<feature type="modified residue" description="N6-acetyllysine; alternate" evidence="14">
    <location>
        <position position="15"/>
    </location>
</feature>
<feature type="modified residue" description="Asymmetric dimethylarginine; alternate" evidence="2">
    <location>
        <position position="26"/>
    </location>
</feature>
<feature type="modified residue" description="Omega-N-methylarginine; alternate" evidence="2">
    <location>
        <position position="26"/>
    </location>
</feature>
<feature type="modified residue" description="Symmetric dimethylarginine; alternate" evidence="2">
    <location>
        <position position="26"/>
    </location>
</feature>
<feature type="modified residue" description="Phosphoserine; by HIPK2 and CDC2" evidence="2">
    <location>
        <position position="36"/>
    </location>
</feature>
<feature type="modified residue" description="Phosphothreonine" evidence="2">
    <location>
        <position position="39"/>
    </location>
</feature>
<feature type="modified residue" description="Phosphoserine" evidence="2">
    <location>
        <position position="44"/>
    </location>
</feature>
<feature type="modified residue" description="Phosphoserine" evidence="2">
    <location>
        <position position="49"/>
    </location>
</feature>
<feature type="modified residue" description="Phosphothreonine; by HIPK2 and CDC2" evidence="12 13">
    <location>
        <position position="53"/>
    </location>
</feature>
<feature type="modified residue" description="Asymmetric dimethylarginine; by PRMT6; alternate" evidence="2">
    <location>
        <position position="58"/>
    </location>
</feature>
<feature type="modified residue" description="Omega-N-methylarginine; by PRMT6; alternate" evidence="2">
    <location>
        <position position="58"/>
    </location>
</feature>
<feature type="modified residue" description="Asymmetric dimethylarginine; by PRMT6; alternate" evidence="2">
    <location>
        <position position="60"/>
    </location>
</feature>
<feature type="modified residue" description="Omega-N-methylarginine; by PRMT6; alternate" evidence="2">
    <location>
        <position position="60"/>
    </location>
</feature>
<feature type="modified residue" description="Phosphoserine" evidence="5 10 12 13">
    <location>
        <position position="99"/>
    </location>
</feature>
<feature type="modified residue" description="Phosphoserine" evidence="5 9 10 11 12 13">
    <location>
        <position position="102"/>
    </location>
</feature>
<feature type="modified residue" description="Phosphoserine" evidence="5 9 10 11 12 13">
    <location>
        <position position="103"/>
    </location>
</feature>
<feature type="cross-link" description="Glycyl lysine isopeptide (Lys-Gly) (interchain with G-Cter in SUMO2); alternate" evidence="2">
    <location>
        <position position="15"/>
    </location>
</feature>
<feature type="splice variant" id="VSP_012406" description="In isoform HMG-Y." evidence="6 7">
    <location>
        <begin position="35"/>
        <end position="45"/>
    </location>
</feature>
<feature type="sequence conflict" description="In Ref. 2; AAK66158/AAK66159." evidence="8" ref="2">
    <original>E</original>
    <variation>G</variation>
    <location>
        <position position="106"/>
    </location>
</feature>
<comment type="function">
    <text>HMG-I/Y bind preferentially to the minor groove of A+T rich regions in double-stranded DNA. It is suggested that these proteins could function in nucleosome phasing and in the 3'-end processing of mRNA transcripts. They are also involved in the transcription regulation of genes containing, or in close proximity to A+T-rich regions.</text>
</comment>
<comment type="subunit">
    <text evidence="4">Interacts with HIPK2.</text>
</comment>
<comment type="subcellular location">
    <subcellularLocation>
        <location>Nucleus</location>
    </subcellularLocation>
    <subcellularLocation>
        <location>Chromosome</location>
    </subcellularLocation>
</comment>
<comment type="alternative products">
    <event type="alternative splicing"/>
    <isoform>
        <id>P17095-2</id>
        <name>HMG-I</name>
        <name>HMGA1a</name>
        <sequence type="displayed"/>
    </isoform>
    <isoform>
        <id>P17095-1</id>
        <name>HMG-Y</name>
        <name>HMGA1b</name>
        <name>HMGI-E</name>
        <sequence type="described" ref="VSP_012406"/>
    </isoform>
</comment>
<comment type="PTM">
    <text evidence="1">Isoforms HMG-I and HMG-Y can be phosphorylated by HIPK2. Phosphorylation may modulate DNA-binding affinity (By similarity).</text>
</comment>
<comment type="PTM">
    <text evidence="1">Methylation at Arg-58 is mutually exclusive with methylation at Arg-60.</text>
</comment>
<comment type="similarity">
    <text evidence="8">Belongs to the HMGA family.</text>
</comment>
<dbReference type="EMBL" id="J04179">
    <property type="protein sequence ID" value="AAA37820.1"/>
    <property type="molecule type" value="mRNA"/>
</dbReference>
<dbReference type="EMBL" id="AF285780">
    <property type="protein sequence ID" value="AAK66158.1"/>
    <property type="molecule type" value="Genomic_DNA"/>
</dbReference>
<dbReference type="EMBL" id="AF285780">
    <property type="protein sequence ID" value="AAK66159.1"/>
    <property type="molecule type" value="Genomic_DNA"/>
</dbReference>
<dbReference type="EMBL" id="AK010617">
    <property type="protein sequence ID" value="BAB27065.1"/>
    <property type="molecule type" value="mRNA"/>
</dbReference>
<dbReference type="EMBL" id="BC013455">
    <property type="protein sequence ID" value="AAH13455.1"/>
    <property type="molecule type" value="mRNA"/>
</dbReference>
<dbReference type="CCDS" id="CCDS28564.1">
    <molecule id="P17095-2"/>
</dbReference>
<dbReference type="CCDS" id="CCDS49010.1">
    <molecule id="P17095-2"/>
</dbReference>
<dbReference type="CCDS" id="CCDS50044.1">
    <molecule id="P17095-1"/>
</dbReference>
<dbReference type="PIR" id="A31895">
    <property type="entry name" value="A31895"/>
</dbReference>
<dbReference type="RefSeq" id="NP_001020598.1">
    <molecule id="P17095-2"/>
    <property type="nucleotide sequence ID" value="NM_001025427.3"/>
</dbReference>
<dbReference type="RefSeq" id="NP_001034445.1">
    <molecule id="P17095-2"/>
    <property type="nucleotide sequence ID" value="NM_001039356.2"/>
</dbReference>
<dbReference type="RefSeq" id="NP_001159948.1">
    <molecule id="P17095-2"/>
    <property type="nucleotide sequence ID" value="NM_001166476.1"/>
</dbReference>
<dbReference type="RefSeq" id="NP_001159949.1">
    <molecule id="P17095-1"/>
    <property type="nucleotide sequence ID" value="NM_001166477.1"/>
</dbReference>
<dbReference type="RefSeq" id="NP_001160007.1">
    <molecule id="P17095-2"/>
    <property type="nucleotide sequence ID" value="NM_001166535.1"/>
</dbReference>
<dbReference type="RefSeq" id="NP_001160008.1">
    <molecule id="P17095-2"/>
    <property type="nucleotide sequence ID" value="NM_001166536.1"/>
</dbReference>
<dbReference type="RefSeq" id="NP_001160009.1">
    <molecule id="P17095-1"/>
    <property type="nucleotide sequence ID" value="NM_001166537.1"/>
</dbReference>
<dbReference type="RefSeq" id="NP_001160011.1">
    <molecule id="P17095-1"/>
    <property type="nucleotide sequence ID" value="NM_001166539.1"/>
</dbReference>
<dbReference type="RefSeq" id="NP_001160012.1">
    <molecule id="P17095-1"/>
    <property type="nucleotide sequence ID" value="NM_001166540.1"/>
</dbReference>
<dbReference type="RefSeq" id="NP_001160013.1">
    <molecule id="P17095-1"/>
    <property type="nucleotide sequence ID" value="NM_001166541.1"/>
</dbReference>
<dbReference type="RefSeq" id="NP_001160014.1">
    <molecule id="P17095-1"/>
    <property type="nucleotide sequence ID" value="NM_001166542.1"/>
</dbReference>
<dbReference type="RefSeq" id="NP_001399647.1">
    <molecule id="P17095-1"/>
    <property type="nucleotide sequence ID" value="NM_001412718.1"/>
</dbReference>
<dbReference type="RefSeq" id="NP_001399660.1">
    <molecule id="P17095-2"/>
    <property type="nucleotide sequence ID" value="NM_001412731.1"/>
</dbReference>
<dbReference type="RefSeq" id="NP_001399661.1">
    <molecule id="P17095-2"/>
    <property type="nucleotide sequence ID" value="NM_001412732.1"/>
</dbReference>
<dbReference type="RefSeq" id="NP_001399662.1">
    <molecule id="P17095-2"/>
    <property type="nucleotide sequence ID" value="NM_001412733.1"/>
</dbReference>
<dbReference type="RefSeq" id="NP_001399669.1">
    <molecule id="P17095-2"/>
    <property type="nucleotide sequence ID" value="NM_001412740.1"/>
</dbReference>
<dbReference type="RefSeq" id="NP_001399712.1">
    <molecule id="P17095-1"/>
    <property type="nucleotide sequence ID" value="NM_001412783.1"/>
</dbReference>
<dbReference type="RefSeq" id="NP_001399878.1">
    <molecule id="P17095-1"/>
    <property type="nucleotide sequence ID" value="NM_001412949.1"/>
</dbReference>
<dbReference type="RefSeq" id="NP_001399879.1">
    <molecule id="P17095-1"/>
    <property type="nucleotide sequence ID" value="NM_001412950.1"/>
</dbReference>
<dbReference type="RefSeq" id="NP_057869.2">
    <molecule id="P17095-2"/>
    <property type="nucleotide sequence ID" value="NM_016660.3"/>
</dbReference>
<dbReference type="BMRB" id="P17095"/>
<dbReference type="BioGRID" id="200340">
    <property type="interactions" value="10"/>
</dbReference>
<dbReference type="BioGRID" id="226328">
    <property type="interactions" value="2"/>
</dbReference>
<dbReference type="CORUM" id="P17095"/>
<dbReference type="DIP" id="DIP-53N"/>
<dbReference type="FunCoup" id="P17095">
    <property type="interactions" value="1163"/>
</dbReference>
<dbReference type="IntAct" id="P17095">
    <property type="interactions" value="3"/>
</dbReference>
<dbReference type="STRING" id="10090.ENSMUSP00000100667"/>
<dbReference type="iPTMnet" id="P17095"/>
<dbReference type="PhosphoSitePlus" id="P17095"/>
<dbReference type="jPOST" id="P17095"/>
<dbReference type="PaxDb" id="10090-ENSMUSP00000100667"/>
<dbReference type="PeptideAtlas" id="P17095"/>
<dbReference type="ProteomicsDB" id="273186">
    <molecule id="P17095-2"/>
</dbReference>
<dbReference type="ProteomicsDB" id="273187">
    <molecule id="P17095-1"/>
</dbReference>
<dbReference type="Pumba" id="P17095"/>
<dbReference type="TopDownProteomics" id="P17095-1">
    <molecule id="P17095-1"/>
</dbReference>
<dbReference type="TopDownProteomics" id="P17095-2">
    <molecule id="P17095-2"/>
</dbReference>
<dbReference type="Antibodypedia" id="29318">
    <property type="antibodies" value="401 antibodies from 39 providers"/>
</dbReference>
<dbReference type="DNASU" id="15361"/>
<dbReference type="Ensembl" id="ENSMUST00000105046.4">
    <molecule id="P17095-2"/>
    <property type="protein sequence ID" value="ENSMUSP00000100667.3"/>
    <property type="gene ID" value="ENSMUSG00000078249.6"/>
</dbReference>
<dbReference type="Ensembl" id="ENSMUST00000114888.11">
    <molecule id="P17095-1"/>
    <property type="protein sequence ID" value="ENSMUSP00000110538.4"/>
    <property type="gene ID" value="ENSMUSG00000046711.17"/>
</dbReference>
<dbReference type="Ensembl" id="ENSMUST00000118570.2">
    <molecule id="P17095-1"/>
    <property type="protein sequence ID" value="ENSMUSP00000114101.2"/>
    <property type="gene ID" value="ENSMUSG00000046711.17"/>
</dbReference>
<dbReference type="Ensembl" id="ENSMUST00000118599.9">
    <molecule id="P17095-2"/>
    <property type="protein sequence ID" value="ENSMUSP00000113015.2"/>
    <property type="gene ID" value="ENSMUSG00000046711.17"/>
</dbReference>
<dbReference type="Ensembl" id="ENSMUST00000119486.9">
    <molecule id="P17095-2"/>
    <property type="protein sequence ID" value="ENSMUSP00000113916.2"/>
    <property type="gene ID" value="ENSMUSG00000046711.17"/>
</dbReference>
<dbReference type="Ensembl" id="ENSMUST00000231358.2">
    <molecule id="P17095-1"/>
    <property type="protein sequence ID" value="ENSMUSP00000155876.2"/>
    <property type="gene ID" value="ENSMUSG00000046711.17"/>
</dbReference>
<dbReference type="Ensembl" id="ENSMUST00000231825.2">
    <molecule id="P17095-1"/>
    <property type="protein sequence ID" value="ENSMUSP00000156327.2"/>
    <property type="gene ID" value="ENSMUSG00000046711.17"/>
</dbReference>
<dbReference type="Ensembl" id="ENSMUST00000231874.2">
    <molecule id="P17095-2"/>
    <property type="protein sequence ID" value="ENSMUSP00000156199.2"/>
    <property type="gene ID" value="ENSMUSG00000046711.17"/>
</dbReference>
<dbReference type="Ensembl" id="ENSMUST00000232013.2">
    <molecule id="P17095-2"/>
    <property type="protein sequence ID" value="ENSMUSP00000155886.2"/>
    <property type="gene ID" value="ENSMUSG00000046711.17"/>
</dbReference>
<dbReference type="Ensembl" id="ENSMUST00000232265.2">
    <molecule id="P17095-2"/>
    <property type="protein sequence ID" value="ENSMUSP00000156173.2"/>
    <property type="gene ID" value="ENSMUSG00000046711.17"/>
</dbReference>
<dbReference type="Ensembl" id="ENSMUST00000232552.2">
    <molecule id="P17095-1"/>
    <property type="protein sequence ID" value="ENSMUSP00000156044.2"/>
    <property type="gene ID" value="ENSMUSG00000046711.17"/>
</dbReference>
<dbReference type="GeneID" id="15361"/>
<dbReference type="KEGG" id="mmu:111241"/>
<dbReference type="KEGG" id="mmu:15361"/>
<dbReference type="UCSC" id="uc008boz.2">
    <molecule id="P17095-2"/>
    <property type="organism name" value="mouse"/>
</dbReference>
<dbReference type="AGR" id="MGI:96160"/>
<dbReference type="CTD" id="111241"/>
<dbReference type="CTD" id="3159"/>
<dbReference type="MGI" id="MGI:96160">
    <property type="gene designation" value="Hmga1"/>
</dbReference>
<dbReference type="VEuPathDB" id="HostDB:ENSMUSG00000046711"/>
<dbReference type="VEuPathDB" id="HostDB:ENSMUSG00000078249"/>
<dbReference type="eggNOG" id="ENOG502S5JW">
    <property type="taxonomic scope" value="Eukaryota"/>
</dbReference>
<dbReference type="GeneTree" id="ENSGT00730000111329"/>
<dbReference type="HOGENOM" id="CLU_138888_0_0_1"/>
<dbReference type="InParanoid" id="P17095"/>
<dbReference type="OMA" id="FLFQFCE"/>
<dbReference type="PhylomeDB" id="P17095"/>
<dbReference type="TreeFam" id="TF351623"/>
<dbReference type="Reactome" id="R-MMU-2559584">
    <property type="pathway name" value="Formation of Senescence-Associated Heterochromatin Foci (SAHF)"/>
</dbReference>
<dbReference type="BioGRID-ORCS" id="111241">
    <property type="hits" value="1 hit in 80 CRISPR screens"/>
</dbReference>
<dbReference type="BioGRID-ORCS" id="15361">
    <property type="hits" value="4 hits in 115 CRISPR screens"/>
</dbReference>
<dbReference type="ChiTaRS" id="Hmga1">
    <property type="organism name" value="mouse"/>
</dbReference>
<dbReference type="PRO" id="PR:P17095"/>
<dbReference type="Proteomes" id="UP000000589">
    <property type="component" value="Chromosome 11"/>
</dbReference>
<dbReference type="Proteomes" id="UP000000589">
    <property type="component" value="Chromosome 17"/>
</dbReference>
<dbReference type="RNAct" id="P17095">
    <property type="molecule type" value="protein"/>
</dbReference>
<dbReference type="Bgee" id="ENSMUSG00000046711">
    <property type="expression patterns" value="Expressed in epiblast (generic) and 154 other cell types or tissues"/>
</dbReference>
<dbReference type="ExpressionAtlas" id="P17095">
    <property type="expression patterns" value="baseline and differential"/>
</dbReference>
<dbReference type="GO" id="GO:0005737">
    <property type="term" value="C:cytoplasm"/>
    <property type="evidence" value="ECO:0000314"/>
    <property type="project" value="MGI"/>
</dbReference>
<dbReference type="GO" id="GO:0001673">
    <property type="term" value="C:male germ cell nucleus"/>
    <property type="evidence" value="ECO:0000314"/>
    <property type="project" value="MGI"/>
</dbReference>
<dbReference type="GO" id="GO:0005739">
    <property type="term" value="C:mitochondrion"/>
    <property type="evidence" value="ECO:0000314"/>
    <property type="project" value="MGI"/>
</dbReference>
<dbReference type="GO" id="GO:0005634">
    <property type="term" value="C:nucleus"/>
    <property type="evidence" value="ECO:0000314"/>
    <property type="project" value="MGI"/>
</dbReference>
<dbReference type="GO" id="GO:0090575">
    <property type="term" value="C:RNA polymerase II transcription regulator complex"/>
    <property type="evidence" value="ECO:0000314"/>
    <property type="project" value="BHF-UCL"/>
</dbReference>
<dbReference type="GO" id="GO:0035985">
    <property type="term" value="C:senescence-associated heterochromatin focus"/>
    <property type="evidence" value="ECO:0000250"/>
    <property type="project" value="UniProtKB"/>
</dbReference>
<dbReference type="GO" id="GO:0106068">
    <property type="term" value="C:SUMO ligase complex"/>
    <property type="evidence" value="ECO:0000314"/>
    <property type="project" value="MGI"/>
</dbReference>
<dbReference type="GO" id="GO:0003682">
    <property type="term" value="F:chromatin binding"/>
    <property type="evidence" value="ECO:0000314"/>
    <property type="project" value="BHF-UCL"/>
</dbReference>
<dbReference type="GO" id="GO:0062037">
    <property type="term" value="F:D-loop DNA binding"/>
    <property type="evidence" value="ECO:0000314"/>
    <property type="project" value="MGI"/>
</dbReference>
<dbReference type="GO" id="GO:0003677">
    <property type="term" value="F:DNA binding"/>
    <property type="evidence" value="ECO:0000314"/>
    <property type="project" value="MGI"/>
</dbReference>
<dbReference type="GO" id="GO:0003680">
    <property type="term" value="F:minor groove of adenine-thymine-rich DNA binding"/>
    <property type="evidence" value="ECO:0000314"/>
    <property type="project" value="BHF-UCL"/>
</dbReference>
<dbReference type="GO" id="GO:0042974">
    <property type="term" value="F:nuclear retinoic acid receptor binding"/>
    <property type="evidence" value="ECO:0000250"/>
    <property type="project" value="UniProtKB"/>
</dbReference>
<dbReference type="GO" id="GO:0046965">
    <property type="term" value="F:nuclear retinoid X receptor binding"/>
    <property type="evidence" value="ECO:0000250"/>
    <property type="project" value="UniProtKB"/>
</dbReference>
<dbReference type="GO" id="GO:0042975">
    <property type="term" value="F:peroxisome proliferator activated receptor binding"/>
    <property type="evidence" value="ECO:0000250"/>
    <property type="project" value="UniProtKB"/>
</dbReference>
<dbReference type="GO" id="GO:0000978">
    <property type="term" value="F:RNA polymerase II cis-regulatory region sequence-specific DNA binding"/>
    <property type="evidence" value="ECO:0000314"/>
    <property type="project" value="BHF-UCL"/>
</dbReference>
<dbReference type="GO" id="GO:0000979">
    <property type="term" value="F:RNA polymerase II core promoter sequence-specific DNA binding"/>
    <property type="evidence" value="ECO:0000314"/>
    <property type="project" value="MGI"/>
</dbReference>
<dbReference type="GO" id="GO:0030527">
    <property type="term" value="F:structural constituent of chromatin"/>
    <property type="evidence" value="ECO:0000304"/>
    <property type="project" value="BHF-UCL"/>
</dbReference>
<dbReference type="GO" id="GO:0003713">
    <property type="term" value="F:transcription coactivator activity"/>
    <property type="evidence" value="ECO:0000314"/>
    <property type="project" value="BHF-UCL"/>
</dbReference>
<dbReference type="GO" id="GO:0001221">
    <property type="term" value="F:transcription coregulator binding"/>
    <property type="evidence" value="ECO:0000250"/>
    <property type="project" value="UniProtKB"/>
</dbReference>
<dbReference type="GO" id="GO:0006914">
    <property type="term" value="P:autophagy"/>
    <property type="evidence" value="ECO:0000314"/>
    <property type="project" value="MGI"/>
</dbReference>
<dbReference type="GO" id="GO:0030183">
    <property type="term" value="P:B cell differentiation"/>
    <property type="evidence" value="ECO:0000314"/>
    <property type="project" value="MGI"/>
</dbReference>
<dbReference type="GO" id="GO:0008283">
    <property type="term" value="P:cell population proliferation"/>
    <property type="evidence" value="ECO:0000315"/>
    <property type="project" value="MGI"/>
</dbReference>
<dbReference type="GO" id="GO:0006325">
    <property type="term" value="P:chromatin organization"/>
    <property type="evidence" value="ECO:0000315"/>
    <property type="project" value="MGI"/>
</dbReference>
<dbReference type="GO" id="GO:0030218">
    <property type="term" value="P:erythrocyte differentiation"/>
    <property type="evidence" value="ECO:0000315"/>
    <property type="project" value="MGI"/>
</dbReference>
<dbReference type="GO" id="GO:0010467">
    <property type="term" value="P:gene expression"/>
    <property type="evidence" value="ECO:0000314"/>
    <property type="project" value="MGI"/>
</dbReference>
<dbReference type="GO" id="GO:0042593">
    <property type="term" value="P:glucose homeostasis"/>
    <property type="evidence" value="ECO:0000315"/>
    <property type="project" value="MGI"/>
</dbReference>
<dbReference type="GO" id="GO:0007507">
    <property type="term" value="P:heart development"/>
    <property type="evidence" value="ECO:0000314"/>
    <property type="project" value="MGI"/>
</dbReference>
<dbReference type="GO" id="GO:0006925">
    <property type="term" value="P:inflammatory cell apoptotic process"/>
    <property type="evidence" value="ECO:0000314"/>
    <property type="project" value="MGI"/>
</dbReference>
<dbReference type="GO" id="GO:0006954">
    <property type="term" value="P:inflammatory response"/>
    <property type="evidence" value="ECO:0000314"/>
    <property type="project" value="MGI"/>
</dbReference>
<dbReference type="GO" id="GO:0008286">
    <property type="term" value="P:insulin receptor signaling pathway"/>
    <property type="evidence" value="ECO:0000314"/>
    <property type="project" value="MGI"/>
</dbReference>
<dbReference type="GO" id="GO:0030073">
    <property type="term" value="P:insulin secretion"/>
    <property type="evidence" value="ECO:0000315"/>
    <property type="project" value="MGI"/>
</dbReference>
<dbReference type="GO" id="GO:0060425">
    <property type="term" value="P:lung morphogenesis"/>
    <property type="evidence" value="ECO:0000316"/>
    <property type="project" value="MGI"/>
</dbReference>
<dbReference type="GO" id="GO:0002320">
    <property type="term" value="P:lymphoid progenitor cell differentiation"/>
    <property type="evidence" value="ECO:0000315"/>
    <property type="project" value="MGI"/>
</dbReference>
<dbReference type="GO" id="GO:0035264">
    <property type="term" value="P:multicellular organism growth"/>
    <property type="evidence" value="ECO:0000316"/>
    <property type="project" value="MGI"/>
</dbReference>
<dbReference type="GO" id="GO:0008285">
    <property type="term" value="P:negative regulation of cell population proliferation"/>
    <property type="evidence" value="ECO:0000250"/>
    <property type="project" value="UniProtKB"/>
</dbReference>
<dbReference type="GO" id="GO:0045892">
    <property type="term" value="P:negative regulation of DNA-templated transcription"/>
    <property type="evidence" value="ECO:0000250"/>
    <property type="project" value="UniProtKB"/>
</dbReference>
<dbReference type="GO" id="GO:0000122">
    <property type="term" value="P:negative regulation of transcription by RNA polymerase II"/>
    <property type="evidence" value="ECO:0000316"/>
    <property type="project" value="MGI"/>
</dbReference>
<dbReference type="GO" id="GO:0022008">
    <property type="term" value="P:neurogenesis"/>
    <property type="evidence" value="ECO:0000315"/>
    <property type="project" value="MGI"/>
</dbReference>
<dbReference type="GO" id="GO:0090402">
    <property type="term" value="P:oncogene-induced cell senescence"/>
    <property type="evidence" value="ECO:0000250"/>
    <property type="project" value="UniProtKB"/>
</dbReference>
<dbReference type="GO" id="GO:0035357">
    <property type="term" value="P:peroxisome proliferator activated receptor signaling pathway"/>
    <property type="evidence" value="ECO:0000315"/>
    <property type="project" value="MGI"/>
</dbReference>
<dbReference type="GO" id="GO:0045893">
    <property type="term" value="P:positive regulation of DNA-templated transcription"/>
    <property type="evidence" value="ECO:0000250"/>
    <property type="project" value="UniProtKB"/>
</dbReference>
<dbReference type="GO" id="GO:0045944">
    <property type="term" value="P:positive regulation of transcription by RNA polymerase II"/>
    <property type="evidence" value="ECO:0000314"/>
    <property type="project" value="BHF-UCL"/>
</dbReference>
<dbReference type="GO" id="GO:0051896">
    <property type="term" value="P:regulation of phosphatidylinositol 3-kinase/protein kinase B signal transduction"/>
    <property type="evidence" value="ECO:0000315"/>
    <property type="project" value="MGI"/>
</dbReference>
<dbReference type="GO" id="GO:0003016">
    <property type="term" value="P:respiratory system process"/>
    <property type="evidence" value="ECO:0000316"/>
    <property type="project" value="MGI"/>
</dbReference>
<dbReference type="GO" id="GO:0051591">
    <property type="term" value="P:response to cAMP"/>
    <property type="evidence" value="ECO:0000315"/>
    <property type="project" value="MGI"/>
</dbReference>
<dbReference type="GO" id="GO:0033762">
    <property type="term" value="P:response to glucagon"/>
    <property type="evidence" value="ECO:0000315"/>
    <property type="project" value="MGI"/>
</dbReference>
<dbReference type="GO" id="GO:0009749">
    <property type="term" value="P:response to glucose"/>
    <property type="evidence" value="ECO:0000314"/>
    <property type="project" value="MGI"/>
</dbReference>
<dbReference type="GO" id="GO:0032868">
    <property type="term" value="P:response to insulin"/>
    <property type="evidence" value="ECO:0000314"/>
    <property type="project" value="MGI"/>
</dbReference>
<dbReference type="GO" id="GO:0009611">
    <property type="term" value="P:response to wounding"/>
    <property type="evidence" value="ECO:0000315"/>
    <property type="project" value="MGI"/>
</dbReference>
<dbReference type="GO" id="GO:0007283">
    <property type="term" value="P:spermatogenesis"/>
    <property type="evidence" value="ECO:0000315"/>
    <property type="project" value="MGI"/>
</dbReference>
<dbReference type="GO" id="GO:0030217">
    <property type="term" value="P:T cell differentiation"/>
    <property type="evidence" value="ECO:0000315"/>
    <property type="project" value="MGI"/>
</dbReference>
<dbReference type="GO" id="GO:0030878">
    <property type="term" value="P:thyroid gland development"/>
    <property type="evidence" value="ECO:0000316"/>
    <property type="project" value="MGI"/>
</dbReference>
<dbReference type="InterPro" id="IPR017956">
    <property type="entry name" value="AT_hook_DNA-bd_motif"/>
</dbReference>
<dbReference type="InterPro" id="IPR000116">
    <property type="entry name" value="HMGA"/>
</dbReference>
<dbReference type="InterPro" id="IPR000637">
    <property type="entry name" value="HMGI/Y_DNA-bd_CS"/>
</dbReference>
<dbReference type="PANTHER" id="PTHR23341:SF1">
    <property type="entry name" value="HIGH MOBILITY GROUP PROTEIN HMG-I_HMG-Y"/>
    <property type="match status" value="1"/>
</dbReference>
<dbReference type="PANTHER" id="PTHR23341">
    <property type="entry name" value="HIGH MOBILITY GROUP PROTEINS HMG-A AND C"/>
    <property type="match status" value="1"/>
</dbReference>
<dbReference type="PRINTS" id="PR00929">
    <property type="entry name" value="ATHOOK"/>
</dbReference>
<dbReference type="PRINTS" id="PR00930">
    <property type="entry name" value="HIGHMOBLTYIY"/>
</dbReference>
<dbReference type="SMART" id="SM00384">
    <property type="entry name" value="AT_hook"/>
    <property type="match status" value="3"/>
</dbReference>
<dbReference type="PROSITE" id="PS00354">
    <property type="entry name" value="HMGI_Y"/>
    <property type="match status" value="3"/>
</dbReference>
<gene>
    <name type="primary">Hmga1</name>
    <name type="synonym">Hmgi</name>
    <name type="synonym">Hmgiy</name>
</gene>
<organism>
    <name type="scientific">Mus musculus</name>
    <name type="common">Mouse</name>
    <dbReference type="NCBI Taxonomy" id="10090"/>
    <lineage>
        <taxon>Eukaryota</taxon>
        <taxon>Metazoa</taxon>
        <taxon>Chordata</taxon>
        <taxon>Craniata</taxon>
        <taxon>Vertebrata</taxon>
        <taxon>Euteleostomi</taxon>
        <taxon>Mammalia</taxon>
        <taxon>Eutheria</taxon>
        <taxon>Euarchontoglires</taxon>
        <taxon>Glires</taxon>
        <taxon>Rodentia</taxon>
        <taxon>Myomorpha</taxon>
        <taxon>Muroidea</taxon>
        <taxon>Muridae</taxon>
        <taxon>Murinae</taxon>
        <taxon>Mus</taxon>
        <taxon>Mus</taxon>
    </lineage>
</organism>
<keyword id="KW-0007">Acetylation</keyword>
<keyword id="KW-0013">ADP-ribosylation</keyword>
<keyword id="KW-0025">Alternative splicing</keyword>
<keyword id="KW-0158">Chromosome</keyword>
<keyword id="KW-0238">DNA-binding</keyword>
<keyword id="KW-1017">Isopeptide bond</keyword>
<keyword id="KW-0488">Methylation</keyword>
<keyword id="KW-0539">Nucleus</keyword>
<keyword id="KW-0597">Phosphoprotein</keyword>
<keyword id="KW-1185">Reference proteome</keyword>
<keyword id="KW-0677">Repeat</keyword>
<keyword id="KW-0804">Transcription</keyword>
<keyword id="KW-0805">Transcription regulation</keyword>
<keyword id="KW-0832">Ubl conjugation</keyword>
<accession>P17095</accession>
<accession>Q91WV2</accession>
<accession>Q924L7</accession>
<accession>Q924L8</accession>
<name>HMGA1_MOUSE</name>
<sequence>MSESGSKSSQPLASKQEKDGTEKRGRGRPRKQPPVSPGTALVGSQKEPSEVPTPKRPRGRPKGSKNKGAAKTRKVTTAPGRKPRGRPKKLEKEEEEGISQESSEEEQ</sequence>